<evidence type="ECO:0000269" key="1">
    <source>
    </source>
</evidence>
<evidence type="ECO:0000269" key="2">
    <source>
    </source>
</evidence>
<evidence type="ECO:0000305" key="3"/>
<evidence type="ECO:0007829" key="4">
    <source>
        <dbReference type="PDB" id="1K3S"/>
    </source>
</evidence>
<gene>
    <name type="primary">sigE</name>
    <name type="synonym">pipC</name>
    <name type="ordered locus">STM1090</name>
</gene>
<accession>O30917</accession>
<accession>Q7CQS7</accession>
<organism>
    <name type="scientific">Salmonella typhimurium (strain LT2 / SGSC1412 / ATCC 700720)</name>
    <dbReference type="NCBI Taxonomy" id="99287"/>
    <lineage>
        <taxon>Bacteria</taxon>
        <taxon>Pseudomonadati</taxon>
        <taxon>Pseudomonadota</taxon>
        <taxon>Gammaproteobacteria</taxon>
        <taxon>Enterobacterales</taxon>
        <taxon>Enterobacteriaceae</taxon>
        <taxon>Salmonella</taxon>
    </lineage>
</organism>
<protein>
    <recommendedName>
        <fullName>Chaperone protein SigE</fullName>
    </recommendedName>
</protein>
<proteinExistence type="evidence at protein level"/>
<sequence length="113" mass="12751">MESLLNRLYDALGLDAPEDEPLLIIDDGIQVYFNESDHTLEMCCPFMPLPDDILTLQHFLRLNYTSAVTIGADADNTALVALYRLPQTSTEEEALTGFELFISNVKQLKEHYA</sequence>
<comment type="function">
    <text evidence="1 2">Molecular chaperone required for SopB/SigD stabilization and secretion.</text>
</comment>
<comment type="subunit">
    <text>Homodimer or higher-order oligomers.</text>
</comment>
<comment type="subcellular location">
    <subcellularLocation>
        <location evidence="3">Cytoplasm</location>
    </subcellularLocation>
</comment>
<comment type="induction">
    <text>Transcriptionally regulated by InvF and SicA. Also regulated by SirA.</text>
</comment>
<comment type="similarity">
    <text evidence="3">Belongs to the IpgE/SigE chaperone family.</text>
</comment>
<feature type="chain" id="PRO_0000160575" description="Chaperone protein SigE">
    <location>
        <begin position="1"/>
        <end position="113"/>
    </location>
</feature>
<feature type="helix" evidence="4">
    <location>
        <begin position="4"/>
        <end position="11"/>
    </location>
</feature>
<feature type="strand" evidence="4">
    <location>
        <begin position="24"/>
        <end position="26"/>
    </location>
</feature>
<feature type="strand" evidence="4">
    <location>
        <begin position="29"/>
        <end position="35"/>
    </location>
</feature>
<feature type="strand" evidence="4">
    <location>
        <begin position="37"/>
        <end position="48"/>
    </location>
</feature>
<feature type="helix" evidence="4">
    <location>
        <begin position="53"/>
        <end position="65"/>
    </location>
</feature>
<feature type="strand" evidence="4">
    <location>
        <begin position="66"/>
        <end position="72"/>
    </location>
</feature>
<feature type="strand" evidence="4">
    <location>
        <begin position="78"/>
        <end position="86"/>
    </location>
</feature>
<feature type="helix" evidence="4">
    <location>
        <begin position="91"/>
        <end position="112"/>
    </location>
</feature>
<reference key="1">
    <citation type="journal article" date="1998" name="J. Bacteriol.">
        <title>Identification of a novel Salmonella invasion locus homologous to Shigella ipgDE.</title>
        <authorList>
            <person name="Hong K.H."/>
            <person name="Miller V.L."/>
        </authorList>
    </citation>
    <scope>NUCLEOTIDE SEQUENCE [GENOMIC DNA]</scope>
    <scope>FUNCTION</scope>
    <scope>REGULATION BY SIRA</scope>
    <source>
        <strain>ATCC 14028s / SGSG 2262</strain>
    </source>
</reference>
<reference key="2">
    <citation type="journal article" date="2001" name="Nature">
        <title>Complete genome sequence of Salmonella enterica serovar Typhimurium LT2.</title>
        <authorList>
            <person name="McClelland M."/>
            <person name="Sanderson K.E."/>
            <person name="Spieth J."/>
            <person name="Clifton S.W."/>
            <person name="Latreille P."/>
            <person name="Courtney L."/>
            <person name="Porwollik S."/>
            <person name="Ali J."/>
            <person name="Dante M."/>
            <person name="Du F."/>
            <person name="Hou S."/>
            <person name="Layman D."/>
            <person name="Leonard S."/>
            <person name="Nguyen C."/>
            <person name="Scott K."/>
            <person name="Holmes A."/>
            <person name="Grewal N."/>
            <person name="Mulvaney E."/>
            <person name="Ryan E."/>
            <person name="Sun H."/>
            <person name="Florea L."/>
            <person name="Miller W."/>
            <person name="Stoneking T."/>
            <person name="Nhan M."/>
            <person name="Waterston R."/>
            <person name="Wilson R.K."/>
        </authorList>
    </citation>
    <scope>NUCLEOTIDE SEQUENCE [LARGE SCALE GENOMIC DNA]</scope>
    <source>
        <strain>LT2 / SGSC1412 / ATCC 700720</strain>
    </source>
</reference>
<reference key="3">
    <citation type="journal article" date="2000" name="Mol. Microbiol.">
        <title>The putative invasion protein chaperone SicA acts together with InvF to activate the expression of Salmonella typhimurium virulence genes.</title>
        <authorList>
            <person name="Darwin K.H."/>
            <person name="Miller V.L."/>
        </authorList>
    </citation>
    <scope>REGULATION BY INVF AND SICA</scope>
    <source>
        <strain>ATCC 14028s / SGSG 2262</strain>
        <strain>LT2</strain>
        <strain>SL1344</strain>
    </source>
</reference>
<reference key="4">
    <citation type="journal article" date="2001" name="J. Bacteriol.">
        <title>SigE is a chaperone for the Salmonella enterica serovar Typhimurium invasion protein SigD.</title>
        <authorList>
            <person name="Darwin K.H."/>
            <person name="Robinson L.S."/>
            <person name="Miller V.L."/>
        </authorList>
    </citation>
    <scope>FUNCTION</scope>
    <source>
        <strain>ATCC 14028s / SGSG 2262</strain>
    </source>
</reference>
<reference key="5">
    <citation type="journal article" date="2001" name="Nat. Struct. Biol.">
        <title>Structural and biochemical characterization of the type III secretion chaperones CesT and SigE.</title>
        <authorList>
            <person name="Luo Y."/>
            <person name="Bertero M.G."/>
            <person name="Frey E.A."/>
            <person name="Pfuetzner R.A."/>
            <person name="Wenk M.R."/>
            <person name="Creagh L."/>
            <person name="Marcus S.L."/>
            <person name="Lim D."/>
            <person name="Sicheri F."/>
            <person name="Kay C."/>
            <person name="Haynes C."/>
            <person name="Finlay B.B."/>
            <person name="Strynadka N.C.J."/>
        </authorList>
    </citation>
    <scope>X-RAY CRYSTALLOGRAPHY (1.9 ANGSTROMS)</scope>
</reference>
<dbReference type="EMBL" id="AF021817">
    <property type="protein sequence ID" value="AAC46235.1"/>
    <property type="molecule type" value="Genomic_DNA"/>
</dbReference>
<dbReference type="EMBL" id="AE006468">
    <property type="protein sequence ID" value="AAL20022.1"/>
    <property type="molecule type" value="Genomic_DNA"/>
</dbReference>
<dbReference type="RefSeq" id="NP_460063.1">
    <property type="nucleotide sequence ID" value="NC_003197.2"/>
</dbReference>
<dbReference type="RefSeq" id="WP_000444724.1">
    <property type="nucleotide sequence ID" value="NC_003197.2"/>
</dbReference>
<dbReference type="PDB" id="1K3S">
    <property type="method" value="X-ray"/>
    <property type="resolution" value="1.90 A"/>
    <property type="chains" value="A/B=1-113"/>
</dbReference>
<dbReference type="PDBsum" id="1K3S"/>
<dbReference type="SMR" id="O30917"/>
<dbReference type="STRING" id="99287.STM1090"/>
<dbReference type="PaxDb" id="99287-STM1090"/>
<dbReference type="GeneID" id="1252608"/>
<dbReference type="KEGG" id="stm:STM1090"/>
<dbReference type="PATRIC" id="fig|99287.12.peg.1154"/>
<dbReference type="HOGENOM" id="CLU_2131737_0_0_6"/>
<dbReference type="OMA" id="DDEIQVY"/>
<dbReference type="BioCyc" id="SENT99287:STM1090-MONOMER"/>
<dbReference type="Proteomes" id="UP000001014">
    <property type="component" value="Chromosome"/>
</dbReference>
<dbReference type="GO" id="GO:0005737">
    <property type="term" value="C:cytoplasm"/>
    <property type="evidence" value="ECO:0007669"/>
    <property type="project" value="UniProtKB-SubCell"/>
</dbReference>
<dbReference type="CDD" id="cd17022">
    <property type="entry name" value="T3SC_IA_SigE-like"/>
    <property type="match status" value="1"/>
</dbReference>
<dbReference type="Gene3D" id="3.30.1460.10">
    <property type="match status" value="1"/>
</dbReference>
<dbReference type="InterPro" id="IPR013095">
    <property type="entry name" value="T3SS_chaperone"/>
</dbReference>
<dbReference type="NCBIfam" id="NF011749">
    <property type="entry name" value="PRK15202.1"/>
    <property type="match status" value="1"/>
</dbReference>
<dbReference type="Pfam" id="PF07824">
    <property type="entry name" value="Chaperone_III"/>
    <property type="match status" value="1"/>
</dbReference>
<dbReference type="PIRSF" id="PIRSF034754">
    <property type="entry name" value="T3SS_chaperone"/>
    <property type="match status" value="1"/>
</dbReference>
<dbReference type="SUPFAM" id="SSF69635">
    <property type="entry name" value="Type III secretory system chaperone-like"/>
    <property type="match status" value="1"/>
</dbReference>
<keyword id="KW-0002">3D-structure</keyword>
<keyword id="KW-0143">Chaperone</keyword>
<keyword id="KW-0963">Cytoplasm</keyword>
<keyword id="KW-1185">Reference proteome</keyword>
<keyword id="KW-0843">Virulence</keyword>
<name>SIGE_SALTY</name>